<feature type="chain" id="PRO_0000105961" description="Bifunctional 3'-phosphoadenosine 5'-phosphosulfate synthase 2">
    <location>
        <begin position="1"/>
        <end position="614"/>
    </location>
</feature>
<feature type="region of interest" description="Adenylyl-sulfate kinase" evidence="12">
    <location>
        <begin position="1"/>
        <end position="215"/>
    </location>
</feature>
<feature type="region of interest" description="Sulfate adenylyltransferase" evidence="12">
    <location>
        <begin position="224"/>
        <end position="614"/>
    </location>
</feature>
<feature type="binding site" evidence="9 17">
    <location>
        <begin position="52"/>
        <end position="57"/>
    </location>
    <ligand>
        <name>ATP</name>
        <dbReference type="ChEBI" id="CHEBI:30616"/>
        <label>1</label>
    </ligand>
</feature>
<feature type="binding site" evidence="1">
    <location>
        <begin position="79"/>
        <end position="82"/>
    </location>
    <ligand>
        <name>adenosine 5'-phosphosulfate</name>
        <dbReference type="ChEBI" id="CHEBI:58243"/>
    </ligand>
</feature>
<feature type="binding site" evidence="1">
    <location>
        <position position="91"/>
    </location>
    <ligand>
        <name>adenosine 5'-phosphosulfate</name>
        <dbReference type="ChEBI" id="CHEBI:58243"/>
    </ligand>
</feature>
<feature type="binding site" evidence="1">
    <location>
        <begin position="96"/>
        <end position="99"/>
    </location>
    <ligand>
        <name>adenosine 5'-phosphosulfate</name>
        <dbReference type="ChEBI" id="CHEBI:58243"/>
    </ligand>
</feature>
<feature type="binding site" evidence="1">
    <location>
        <begin position="122"/>
        <end position="123"/>
    </location>
    <ligand>
        <name>adenosine 5'-phosphosulfate</name>
        <dbReference type="ChEBI" id="CHEBI:58243"/>
    </ligand>
</feature>
<feature type="binding site" evidence="1">
    <location>
        <position position="161"/>
    </location>
    <ligand>
        <name>adenosine 5'-phosphosulfate</name>
        <dbReference type="ChEBI" id="CHEBI:58243"/>
    </ligand>
</feature>
<feature type="binding site" evidence="1">
    <location>
        <begin position="174"/>
        <end position="175"/>
    </location>
    <ligand>
        <name>adenosine 5'-phosphosulfate</name>
        <dbReference type="ChEBI" id="CHEBI:58243"/>
    </ligand>
</feature>
<feature type="binding site" evidence="9 17">
    <location>
        <position position="197"/>
    </location>
    <ligand>
        <name>ATP</name>
        <dbReference type="ChEBI" id="CHEBI:30616"/>
        <label>1</label>
    </ligand>
</feature>
<feature type="binding site" evidence="1">
    <location>
        <begin position="409"/>
        <end position="412"/>
    </location>
    <ligand>
        <name>ATP</name>
        <dbReference type="ChEBI" id="CHEBI:30616"/>
        <label>2</label>
    </ligand>
</feature>
<feature type="binding site" evidence="1">
    <location>
        <begin position="511"/>
        <end position="515"/>
    </location>
    <ligand>
        <name>ATP</name>
        <dbReference type="ChEBI" id="CHEBI:30616"/>
        <label>2</label>
    </ligand>
</feature>
<feature type="binding site" evidence="1">
    <location>
        <position position="553"/>
    </location>
    <ligand>
        <name>ATP</name>
        <dbReference type="ChEBI" id="CHEBI:30616"/>
        <label>2</label>
    </ligand>
</feature>
<feature type="splice variant" id="VSP_001259" description="In isoform B." evidence="10 11">
    <original>D</original>
    <variation>DGMALP</variation>
    <location>
        <position position="288"/>
    </location>
</feature>
<feature type="sequence variant" id="VAR_029136" description="Decreased sulfate assimilation; dbSNP:rs17173698." evidence="2">
    <original>E</original>
    <variation>K</variation>
    <location>
        <position position="10"/>
    </location>
</feature>
<feature type="sequence variant" id="VAR_073026" description="In BCYM4; reduced 3'-phosphoadenosine 5'-phosphosulfate biosynthetic process." evidence="5">
    <original>C</original>
    <variation>Y</variation>
    <location>
        <position position="43"/>
    </location>
</feature>
<feature type="sequence variant" id="VAR_063049" description="In BCYM4; patient with premature pubarche and hyperandrogenism; decreased sulfate assimilation; increases ubiquitin-dependent protein instability; dbSNP:rs121908951." evidence="3 6">
    <original>T</original>
    <variation>R</variation>
    <location>
        <position position="48"/>
    </location>
</feature>
<feature type="sequence variant" id="VAR_073027" description="In BCYM4; reduced 3'-phosphoadenosine 5'-phosphosulfate biosynthetic process." evidence="5">
    <original>L</original>
    <variation>Q</variation>
    <location>
        <position position="76"/>
    </location>
</feature>
<feature type="sequence variant" id="VAR_073028" description="No effect on 3'-phosphoadenosine 5'-phosphosulfate biosynthetic process; dbSNP:rs774709274." evidence="5">
    <original>E</original>
    <variation>K</variation>
    <location>
        <position position="183"/>
    </location>
</feature>
<feature type="sequence variant" id="VAR_073029" description="In BCYM4; increases ubiquitin-dependent protein instability; dbSNP:rs138943074." evidence="6">
    <original>G</original>
    <variation>D</variation>
    <location>
        <position position="270"/>
    </location>
</feature>
<feature type="sequence variant" id="VAR_029137" description="In dbSNP:rs45624631." evidence="2">
    <original>M</original>
    <variation>L</variation>
    <location>
        <position position="281"/>
    </location>
</feature>
<feature type="sequence variant" id="VAR_022077" description="Decreased sulfate assimilation; dbSNP:rs45467596." evidence="2">
    <original>V</original>
    <variation>M</variation>
    <location>
        <position position="291"/>
    </location>
</feature>
<feature type="sequence variant" id="VAR_029138" description="In dbSNP:rs17129133." evidence="2">
    <original>R</original>
    <variation>K</variation>
    <location>
        <position position="432"/>
    </location>
</feature>
<feature type="sequence conflict" description="In Ref. 2; AAD38423." evidence="12" ref="2">
    <original>R</original>
    <variation>K</variation>
    <location>
        <position position="166"/>
    </location>
</feature>
<feature type="sequence conflict" description="In Ref. 3; AAK00296." evidence="12" ref="3">
    <original>E</original>
    <variation>G</variation>
    <location>
        <position position="361"/>
    </location>
</feature>
<feature type="sequence conflict" description="In Ref. 1; AAC64583." evidence="12" ref="1">
    <original>R</original>
    <variation>C</variation>
    <location>
        <position position="426"/>
    </location>
</feature>
<feature type="sequence conflict" description="In Ref. 2; AAD38423." evidence="12" ref="2">
    <original>P</original>
    <variation>L</variation>
    <location>
        <position position="567"/>
    </location>
</feature>
<feature type="helix" evidence="21">
    <location>
        <begin position="27"/>
        <end position="33"/>
    </location>
</feature>
<feature type="strand" evidence="21">
    <location>
        <begin position="34"/>
        <end position="37"/>
    </location>
</feature>
<feature type="strand" evidence="21">
    <location>
        <begin position="43"/>
        <end position="48"/>
    </location>
</feature>
<feature type="helix" evidence="21">
    <location>
        <begin position="55"/>
        <end position="68"/>
    </location>
</feature>
<feature type="strand" evidence="21">
    <location>
        <begin position="73"/>
        <end position="76"/>
    </location>
</feature>
<feature type="helix" evidence="21">
    <location>
        <begin position="78"/>
        <end position="81"/>
    </location>
</feature>
<feature type="turn" evidence="21">
    <location>
        <begin position="82"/>
        <end position="88"/>
    </location>
</feature>
<feature type="helix" evidence="21">
    <location>
        <begin position="93"/>
        <end position="113"/>
    </location>
</feature>
<feature type="strand" evidence="21">
    <location>
        <begin position="116"/>
        <end position="120"/>
    </location>
</feature>
<feature type="helix" evidence="21">
    <location>
        <begin position="126"/>
        <end position="138"/>
    </location>
</feature>
<feature type="strand" evidence="21">
    <location>
        <begin position="143"/>
        <end position="149"/>
    </location>
</feature>
<feature type="helix" evidence="21">
    <location>
        <begin position="152"/>
        <end position="158"/>
    </location>
</feature>
<feature type="strand" evidence="21">
    <location>
        <begin position="160"/>
        <end position="162"/>
    </location>
</feature>
<feature type="helix" evidence="21">
    <location>
        <begin position="163"/>
        <end position="168"/>
    </location>
</feature>
<feature type="strand" evidence="20">
    <location>
        <begin position="171"/>
        <end position="174"/>
    </location>
</feature>
<feature type="turn" evidence="21">
    <location>
        <begin position="176"/>
        <end position="178"/>
    </location>
</feature>
<feature type="strand" evidence="21">
    <location>
        <begin position="189"/>
        <end position="193"/>
    </location>
</feature>
<feature type="turn" evidence="21">
    <location>
        <begin position="194"/>
        <end position="196"/>
    </location>
</feature>
<feature type="helix" evidence="21">
    <location>
        <begin position="199"/>
        <end position="212"/>
    </location>
</feature>
<feature type="helix" evidence="18">
    <location>
        <begin position="231"/>
        <end position="233"/>
    </location>
</feature>
<feature type="helix" evidence="18">
    <location>
        <begin position="234"/>
        <end position="241"/>
    </location>
</feature>
<feature type="strand" evidence="18">
    <location>
        <begin position="246"/>
        <end position="248"/>
    </location>
</feature>
<feature type="helix" evidence="18">
    <location>
        <begin position="251"/>
        <end position="261"/>
    </location>
</feature>
<feature type="turn" evidence="18">
    <location>
        <begin position="262"/>
        <end position="267"/>
    </location>
</feature>
<feature type="helix" evidence="18">
    <location>
        <begin position="274"/>
        <end position="283"/>
    </location>
</feature>
<feature type="strand" evidence="19">
    <location>
        <begin position="284"/>
        <end position="286"/>
    </location>
</feature>
<feature type="strand" evidence="18">
    <location>
        <begin position="287"/>
        <end position="290"/>
    </location>
</feature>
<feature type="strand" evidence="18">
    <location>
        <begin position="300"/>
        <end position="302"/>
    </location>
</feature>
<feature type="helix" evidence="18">
    <location>
        <begin position="304"/>
        <end position="310"/>
    </location>
</feature>
<feature type="strand" evidence="18">
    <location>
        <begin position="314"/>
        <end position="320"/>
    </location>
</feature>
<feature type="strand" evidence="18">
    <location>
        <begin position="323"/>
        <end position="335"/>
    </location>
</feature>
<feature type="helix" evidence="18">
    <location>
        <begin position="338"/>
        <end position="346"/>
    </location>
</feature>
<feature type="helix" evidence="18">
    <location>
        <begin position="354"/>
        <end position="360"/>
    </location>
</feature>
<feature type="strand" evidence="18">
    <location>
        <begin position="364"/>
        <end position="375"/>
    </location>
</feature>
<feature type="helix" evidence="18">
    <location>
        <begin position="384"/>
        <end position="386"/>
    </location>
</feature>
<feature type="helix" evidence="18">
    <location>
        <begin position="390"/>
        <end position="399"/>
    </location>
</feature>
<feature type="strand" evidence="18">
    <location>
        <begin position="403"/>
        <end position="412"/>
    </location>
</feature>
<feature type="helix" evidence="18">
    <location>
        <begin position="416"/>
        <end position="431"/>
    </location>
</feature>
<feature type="strand" evidence="18">
    <location>
        <begin position="437"/>
        <end position="444"/>
    </location>
</feature>
<feature type="helix" evidence="18">
    <location>
        <begin position="455"/>
        <end position="467"/>
    </location>
</feature>
<feature type="helix" evidence="18">
    <location>
        <begin position="473"/>
        <end position="475"/>
    </location>
</feature>
<feature type="strand" evidence="18">
    <location>
        <begin position="476"/>
        <end position="478"/>
    </location>
</feature>
<feature type="helix" evidence="18">
    <location>
        <begin position="489"/>
        <end position="502"/>
    </location>
</feature>
<feature type="strand" evidence="18">
    <location>
        <begin position="506"/>
        <end position="509"/>
    </location>
</feature>
<feature type="turn" evidence="18">
    <location>
        <begin position="520"/>
        <end position="522"/>
    </location>
</feature>
<feature type="strand" evidence="18">
    <location>
        <begin position="524"/>
        <end position="527"/>
    </location>
</feature>
<feature type="helix" evidence="18">
    <location>
        <begin position="531"/>
        <end position="538"/>
    </location>
</feature>
<feature type="strand" evidence="18">
    <location>
        <begin position="546"/>
        <end position="548"/>
    </location>
</feature>
<feature type="strand" evidence="18">
    <location>
        <begin position="553"/>
        <end position="556"/>
    </location>
</feature>
<feature type="turn" evidence="18">
    <location>
        <begin position="557"/>
        <end position="560"/>
    </location>
</feature>
<feature type="strand" evidence="18">
    <location>
        <begin position="561"/>
        <end position="564"/>
    </location>
</feature>
<feature type="helix" evidence="18">
    <location>
        <begin position="567"/>
        <end position="572"/>
    </location>
</feature>
<feature type="helix" evidence="18">
    <location>
        <begin position="578"/>
        <end position="586"/>
    </location>
</feature>
<feature type="helix" evidence="18">
    <location>
        <begin position="598"/>
        <end position="610"/>
    </location>
</feature>
<evidence type="ECO:0000250" key="1">
    <source>
        <dbReference type="UniProtKB" id="O43252"/>
    </source>
</evidence>
<evidence type="ECO:0000269" key="2">
    <source>
    </source>
</evidence>
<evidence type="ECO:0000269" key="3">
    <source>
    </source>
</evidence>
<evidence type="ECO:0000269" key="4">
    <source>
    </source>
</evidence>
<evidence type="ECO:0000269" key="5">
    <source>
    </source>
</evidence>
<evidence type="ECO:0000269" key="6">
    <source>
    </source>
</evidence>
<evidence type="ECO:0000269" key="7">
    <source>
    </source>
</evidence>
<evidence type="ECO:0000269" key="8">
    <source>
    </source>
</evidence>
<evidence type="ECO:0000269" key="9">
    <source ref="12"/>
</evidence>
<evidence type="ECO:0000303" key="10">
    <source>
    </source>
</evidence>
<evidence type="ECO:0000303" key="11">
    <source ref="6"/>
</evidence>
<evidence type="ECO:0000305" key="12"/>
<evidence type="ECO:0000305" key="13">
    <source>
    </source>
</evidence>
<evidence type="ECO:0000305" key="14">
    <source>
    </source>
</evidence>
<evidence type="ECO:0000305" key="15">
    <source>
    </source>
</evidence>
<evidence type="ECO:0000305" key="16">
    <source>
    </source>
</evidence>
<evidence type="ECO:0007744" key="17">
    <source>
        <dbReference type="PDB" id="2AX4"/>
    </source>
</evidence>
<evidence type="ECO:0007829" key="18">
    <source>
        <dbReference type="PDB" id="7FH3"/>
    </source>
</evidence>
<evidence type="ECO:0007829" key="19">
    <source>
        <dbReference type="PDB" id="7FHA"/>
    </source>
</evidence>
<evidence type="ECO:0007829" key="20">
    <source>
        <dbReference type="PDB" id="8I1N"/>
    </source>
</evidence>
<evidence type="ECO:0007829" key="21">
    <source>
        <dbReference type="PDB" id="8I1O"/>
    </source>
</evidence>
<gene>
    <name type="primary">PAPSS2</name>
    <name type="synonym">ATPSK2</name>
</gene>
<reference key="1">
    <citation type="journal article" date="1998" name="Nat. Genet.">
        <title>Mutations in orthologous genes in human spondyloepimetaphyseal dysplasia and the brachymorphic mouse.</title>
        <authorList>
            <person name="ul Haque M.F."/>
            <person name="King L.M."/>
            <person name="Krakow D."/>
            <person name="Cantor R.M."/>
            <person name="Rusiniak M.E."/>
            <person name="Swank R.T."/>
            <person name="Superti-Furga A."/>
            <person name="Haque S."/>
            <person name="Abbas H."/>
            <person name="Ahmad W."/>
            <person name="Ahmad M."/>
            <person name="Cohn D.H."/>
        </authorList>
    </citation>
    <scope>NUCLEOTIDE SEQUENCE [MRNA] (ISOFORM A)</scope>
    <scope>FUNCTION</scope>
    <scope>INVOLVEMENT IN BCYM4</scope>
    <source>
        <tissue>Fetal cartilage</tissue>
    </source>
</reference>
<reference key="2">
    <citation type="submission" date="1998-06" db="EMBL/GenBank/DDBJ databases">
        <authorList>
            <person name="Franzon V.L."/>
            <person name="Gibson M.A."/>
            <person name="Hatzinikolas G."/>
            <person name="Cleary E.G."/>
            <person name="Woolatt E."/>
            <person name="Sutherland G.R."/>
        </authorList>
    </citation>
    <scope>NUCLEOTIDE SEQUENCE [MRNA] (ISOFORM A)</scope>
</reference>
<reference key="3">
    <citation type="submission" date="2000-10" db="EMBL/GenBank/DDBJ databases">
        <title>Human bifunctional 3'-phosphoadenosine 5'-phosphosulfate synthase: differential expression of isoforms and effect of polymorphisms on activity.</title>
        <authorList>
            <person name="Fuda H."/>
            <person name="Shimizu C."/>
            <person name="Strott C.A."/>
        </authorList>
    </citation>
    <scope>NUCLEOTIDE SEQUENCE [MRNA] (ISOFORM A)</scope>
</reference>
<reference key="4">
    <citation type="journal article" date="2000" name="Biochem. Biophys. Res. Commun.">
        <title>Human 3'-phosphoadenosine 5'-phosphosulfate synthetase 1 (PAPSS1) and PAPSS2: gene cloning, characterization and chromosomal localization.</title>
        <authorList>
            <person name="Xu Z.-H."/>
            <person name="Otterness D.M."/>
            <person name="Freimuth R.R."/>
            <person name="Carlini E.J."/>
            <person name="Wood T.C."/>
            <person name="Mitchell S."/>
            <person name="Moon E."/>
            <person name="Kim U.-J."/>
            <person name="Xu J.-P."/>
            <person name="Siciliano M.J."/>
            <person name="Weinshilboum R.M."/>
        </authorList>
    </citation>
    <scope>NUCLEOTIDE SEQUENCE [GENOMIC DNA] (ISOFORM A)</scope>
</reference>
<reference key="5">
    <citation type="journal article" date="1999" name="J. Biol. Chem.">
        <title>Genomic organization of the mouse and human genes encoding the ATP sulfurylase/adenosine 5'-phosphosulfate kinase isoform SK2.</title>
        <authorList>
            <person name="Kurima K."/>
            <person name="Singh B."/>
            <person name="Schwartz N.B."/>
        </authorList>
    </citation>
    <scope>NUCLEOTIDE SEQUENCE [MRNA] (ISOFORM B)</scope>
    <source>
        <tissue>Liver</tissue>
    </source>
</reference>
<reference key="6">
    <citation type="submission" date="2001-01" db="EMBL/GenBank/DDBJ databases">
        <title>3'-phosphoadenosine 5'-phosphosulfate synthase 2b isoform.</title>
        <authorList>
            <person name="Venkatachalam K.V."/>
            <person name="Fuda H."/>
            <person name="Strott C.A."/>
        </authorList>
    </citation>
    <scope>NUCLEOTIDE SEQUENCE [MRNA] (ISOFORM B)</scope>
</reference>
<reference key="7">
    <citation type="journal article" date="2004" name="Genome Res.">
        <title>The status, quality, and expansion of the NIH full-length cDNA project: the Mammalian Gene Collection (MGC).</title>
        <authorList>
            <consortium name="The MGC Project Team"/>
        </authorList>
    </citation>
    <scope>NUCLEOTIDE SEQUENCE [LARGE SCALE MRNA] (ISOFORM A)</scope>
    <source>
        <tissue>Colon</tissue>
    </source>
</reference>
<reference key="8">
    <citation type="journal article" date="1998" name="Am. J. Med. Genet.">
        <title>Distinct, autosomal recessive form of spondyloepimetaphyseal dysplasia segregating in an inbred Pakistani kindred.</title>
        <authorList>
            <person name="Ahmad M."/>
            <person name="Haque M.F."/>
            <person name="Ahmad W."/>
            <person name="Abbas H."/>
            <person name="Haque S."/>
            <person name="Krakow D."/>
            <person name="Rimoin D.L."/>
            <person name="Lachman R.S."/>
            <person name="Cohn D.H."/>
        </authorList>
    </citation>
    <scope>INVOLVEMENT IN BCYM4</scope>
</reference>
<reference key="9">
    <citation type="journal article" date="2009" name="N. Engl. J. Med.">
        <title>Inactivating PAPSS2 mutations in a patient with premature pubarche.</title>
        <authorList>
            <person name="Noordam C."/>
            <person name="Dhir V."/>
            <person name="McNelis J.C."/>
            <person name="Schlereth F."/>
            <person name="Hanley N.A."/>
            <person name="Krone N."/>
            <person name="Smeitink J.A."/>
            <person name="Smeets R."/>
            <person name="Sweep F.C."/>
            <person name="Claahsen-van der Grinten H.L."/>
            <person name="Arlt W."/>
        </authorList>
    </citation>
    <scope>FUNCTION</scope>
    <scope>CATALYTIC ACTIVITY</scope>
    <scope>PATHWAY</scope>
    <scope>VARIANT BCYM4 ARG-48</scope>
    <scope>CHARACTERIZATION OF VARIANT BCYM4 ARG-48</scope>
    <scope>TISSUE SPECIFICITY</scope>
</reference>
<reference key="10">
    <citation type="journal article" date="2011" name="BMC Syst. Biol.">
        <title>Initial characterization of the human central proteome.</title>
        <authorList>
            <person name="Burkard T.R."/>
            <person name="Planyavsky M."/>
            <person name="Kaupe I."/>
            <person name="Breitwieser F.P."/>
            <person name="Buerckstuemmer T."/>
            <person name="Bennett K.L."/>
            <person name="Superti-Furga G."/>
            <person name="Colinge J."/>
        </authorList>
    </citation>
    <scope>IDENTIFICATION BY MASS SPECTROMETRY [LARGE SCALE ANALYSIS]</scope>
</reference>
<reference key="11">
    <citation type="journal article" date="2014" name="J. Proteomics">
        <title>An enzyme assisted RP-RPLC approach for in-depth analysis of human liver phosphoproteome.</title>
        <authorList>
            <person name="Bian Y."/>
            <person name="Song C."/>
            <person name="Cheng K."/>
            <person name="Dong M."/>
            <person name="Wang F."/>
            <person name="Huang J."/>
            <person name="Sun D."/>
            <person name="Wang L."/>
            <person name="Ye M."/>
            <person name="Zou H."/>
        </authorList>
    </citation>
    <scope>IDENTIFICATION BY MASS SPECTROMETRY [LARGE SCALE ANALYSIS]</scope>
    <source>
        <tissue>Liver</tissue>
    </source>
</reference>
<reference key="12">
    <citation type="submission" date="2005-09" db="PDB data bank">
        <title>Crystal structure of the kinase domain of PAPSS 2.</title>
        <authorList>
            <consortium name="Structural genomics consortium (SGC)"/>
        </authorList>
    </citation>
    <scope>X-RAY CRYSTALLOGRAPHY (2.50 ANGSTROMS) OF 21-218 IN COMPLEX WITH ATP</scope>
</reference>
<reference key="13">
    <citation type="journal article" date="2002" name="Pharmacogenetics">
        <title>Human 3'-phosphoadenosine 5'-phosphosulfate synthetase 2 (PAPSS2) pharmacogenetics: gene resequencing, genetic polymorphisms and functional characterization of variant allozymes.</title>
        <authorList>
            <person name="Xu Z.-H."/>
            <person name="Freimuth R.R."/>
            <person name="Eckloff B."/>
            <person name="Wieben E."/>
            <person name="Weinshilboum R.M."/>
        </authorList>
    </citation>
    <scope>FUNCTION</scope>
    <scope>CATALYTIC ACTIVITY</scope>
    <scope>PATHWAY</scope>
    <scope>VARIANTS LYS-10; LEU-281; MET-291 AND LYS-432</scope>
    <scope>CHARACTERIZATION OF VARIANTS LYS-10 AND MET-291</scope>
</reference>
<reference key="14">
    <citation type="journal article" date="2013" name="Am. J. Med. Genet. A">
        <title>Spondyloepimetaphyseal dysplasia Pakistani type: expansion of the phenotype.</title>
        <authorList>
            <person name="Tueysuez B."/>
            <person name="Yilmaz S."/>
            <person name="Guel E."/>
            <person name="Kolb L."/>
            <person name="Bilguvar K."/>
            <person name="Evliyaoglu O."/>
            <person name="Guenel M."/>
        </authorList>
    </citation>
    <scope>INVOLVEMENT IN BCYM4</scope>
</reference>
<reference key="15">
    <citation type="journal article" date="2013" name="Hum. Mutat.">
        <title>Clinical and radiographic features of the autosomal recessive form of brachyolmia caused by PAPSS2 mutations.</title>
        <authorList>
            <person name="Iida A."/>
            <person name="Simsek-Kiper P.O."/>
            <person name="Mizumoto S."/>
            <person name="Hoshino T."/>
            <person name="Elcioglu N."/>
            <person name="Horemuzova E."/>
            <person name="Geiberger S."/>
            <person name="Yesil G."/>
            <person name="Kayserili H."/>
            <person name="Utine G.E."/>
            <person name="Boduroglu K."/>
            <person name="Watanabe S."/>
            <person name="Ohashi H."/>
            <person name="Alanay Y."/>
            <person name="Sugahara K."/>
            <person name="Nishimura G."/>
            <person name="Ikegawa S."/>
        </authorList>
    </citation>
    <scope>VARIANTS BCYM4 TYR-43 AND GLN-76</scope>
    <scope>CHARACTERIZATION OF VARIANTS BCYM4 TYR-43 AND GLN-76</scope>
    <scope>VARIANT LYS-183</scope>
    <scope>CHARACTERIZATION OF VARIANT LYS-183</scope>
    <scope>FUNCTION</scope>
    <scope>CATALYTIC ACTIVITY</scope>
    <scope>PATHWAY</scope>
</reference>
<reference key="16">
    <citation type="journal article" date="2015" name="J. Clin. Endocrinol. Metab.">
        <title>PAPSS2 deficiency causes androgen excess via impaired DHEA sulfation - in vitro and in vivo studies in a family harboring two novel PAPSS2 mutations.</title>
        <authorList>
            <person name="Oostdijk W."/>
            <person name="Idkowiak J."/>
            <person name="Mueller J.W."/>
            <person name="House P.J."/>
            <person name="Taylor A.E."/>
            <person name="O'Reilly M.W."/>
            <person name="Hughes B.A."/>
            <person name="de Vries M.C."/>
            <person name="Kant S.G."/>
            <person name="Santen G.W."/>
            <person name="Verkerk A.J."/>
            <person name="Uitterlinden A.G."/>
            <person name="Wit J.M."/>
            <person name="Losekoot M."/>
            <person name="Arlt W."/>
        </authorList>
    </citation>
    <scope>VARIANT BCYM4 ASP-270</scope>
    <scope>CHARACTERIZATION OF VARIANTS BCYM4 ARG-48 AND ASP-270</scope>
    <scope>FUNCTION</scope>
    <scope>CATALYTIC ACTIVITY</scope>
    <scope>PATHWAY</scope>
</reference>
<keyword id="KW-0002">3D-structure</keyword>
<keyword id="KW-0025">Alternative splicing</keyword>
<keyword id="KW-0067">ATP-binding</keyword>
<keyword id="KW-0225">Disease variant</keyword>
<keyword id="KW-0242">Dwarfism</keyword>
<keyword id="KW-0418">Kinase</keyword>
<keyword id="KW-0511">Multifunctional enzyme</keyword>
<keyword id="KW-0547">Nucleotide-binding</keyword>
<keyword id="KW-0548">Nucleotidyltransferase</keyword>
<keyword id="KW-1267">Proteomics identification</keyword>
<keyword id="KW-1185">Reference proteome</keyword>
<keyword id="KW-0808">Transferase</keyword>
<proteinExistence type="evidence at protein level"/>
<comment type="function">
    <text evidence="2 3 5 6 8">Bifunctional enzyme with both ATP sulfurylase and APS kinase activity, which mediates two steps in the sulfate activation pathway. The first step is the transfer of a sulfate group to ATP to yield adenosine 5'-phosphosulfate (APS), and the second step is the transfer of a phosphate group from ATP to APS yielding 3'-phosphoadenylylsulfate/PAPS, the activated sulfate donor used by sulfotransferases (PubMed:11773860, PubMed:19474428, PubMed:23824674, PubMed:25594860). In mammals, PAPS is the sole source of sulfate while APS appears to only be an intermediate in the sulfate-activation pathway (PubMed:11773860, PubMed:19474428, PubMed:23824674, PubMed:25594860). Plays indirectly an important role in skeletogenesis during postnatal growth (PubMed:9771708).</text>
</comment>
<comment type="catalytic activity">
    <reaction evidence="13 14 15 16">
        <text>sulfate + ATP + H(+) = adenosine 5'-phosphosulfate + diphosphate</text>
        <dbReference type="Rhea" id="RHEA:18133"/>
        <dbReference type="ChEBI" id="CHEBI:15378"/>
        <dbReference type="ChEBI" id="CHEBI:16189"/>
        <dbReference type="ChEBI" id="CHEBI:30616"/>
        <dbReference type="ChEBI" id="CHEBI:33019"/>
        <dbReference type="ChEBI" id="CHEBI:58243"/>
        <dbReference type="EC" id="2.7.7.4"/>
    </reaction>
    <physiologicalReaction direction="left-to-right" evidence="14">
        <dbReference type="Rhea" id="RHEA:18134"/>
    </physiologicalReaction>
</comment>
<comment type="catalytic activity">
    <reaction evidence="13 14 15">
        <text>adenosine 5'-phosphosulfate + ATP = 3'-phosphoadenylyl sulfate + ADP + H(+)</text>
        <dbReference type="Rhea" id="RHEA:24152"/>
        <dbReference type="ChEBI" id="CHEBI:15378"/>
        <dbReference type="ChEBI" id="CHEBI:30616"/>
        <dbReference type="ChEBI" id="CHEBI:58243"/>
        <dbReference type="ChEBI" id="CHEBI:58339"/>
        <dbReference type="ChEBI" id="CHEBI:456216"/>
        <dbReference type="EC" id="2.7.1.25"/>
    </reaction>
    <physiologicalReaction direction="left-to-right" evidence="14">
        <dbReference type="Rhea" id="RHEA:24153"/>
    </physiologicalReaction>
</comment>
<comment type="pathway">
    <text evidence="2 3 5 6">Sulfur metabolism; sulfate assimilation.</text>
</comment>
<comment type="interaction">
    <interactant intactId="EBI-1053912">
        <id>O95340</id>
    </interactant>
    <interactant intactId="EBI-741885">
        <id>Q96LK0</id>
        <label>CEP19</label>
    </interactant>
    <organismsDiffer>false</organismsDiffer>
    <experiments>6</experiments>
</comment>
<comment type="interaction">
    <interactant intactId="EBI-1053912">
        <id>O95340</id>
    </interactant>
    <interactant intactId="EBI-7116203">
        <id>O75031</id>
        <label>HSF2BP</label>
    </interactant>
    <organismsDiffer>false</organismsDiffer>
    <experiments>3</experiments>
</comment>
<comment type="interaction">
    <interactant intactId="EBI-1053912">
        <id>O95340</id>
    </interactant>
    <interactant intactId="EBI-748974">
        <id>Q96CV9</id>
        <label>OPTN</label>
    </interactant>
    <organismsDiffer>false</organismsDiffer>
    <experiments>3</experiments>
</comment>
<comment type="interaction">
    <interactant intactId="EBI-1053912">
        <id>O95340</id>
    </interactant>
    <interactant intactId="EBI-713760">
        <id>O43252</id>
        <label>PAPSS1</label>
    </interactant>
    <organismsDiffer>false</organismsDiffer>
    <experiments>2</experiments>
</comment>
<comment type="alternative products">
    <event type="alternative splicing"/>
    <isoform>
        <id>O95340-1</id>
        <name>A</name>
        <sequence type="displayed"/>
    </isoform>
    <isoform>
        <id>O95340-2</id>
        <name>B</name>
        <sequence type="described" ref="VSP_001259"/>
    </isoform>
</comment>
<comment type="tissue specificity">
    <text evidence="3">Expressed in cartilage and adrenal gland.</text>
</comment>
<comment type="disease" evidence="3 4 5 6 7 8">
    <disease id="DI-02331">
        <name>Brachyolmia type 4 with mild epiphyseal and metaphyseal changes</name>
        <acronym>BCYM4</acronym>
        <description>A form of brachyolmia, a clinically and genetically heterogeneous skeletal dysplasia primarily affecting the spine and characterized by a short trunk, short stature, and platyspondyly. BCYM4 is an autosomal recessive form with mild epiphyseal and metaphyseal changes. Clinical features include short stature evidenced at birth, short and bowed lower limbs, mild brachydactyly, kyphoscoliosis, abnormal gait, enlarged knee joints. Some BCYM4 patients may manifest premature pubarche and hyperandrogenism associated with skeletal dysplasia and short stature.</description>
        <dbReference type="MIM" id="612847"/>
    </disease>
    <text>The disease is caused by variants affecting the gene represented in this entry.</text>
</comment>
<comment type="similarity">
    <text evidence="12">In the N-terminal section; belongs to the APS kinase family.</text>
</comment>
<comment type="similarity">
    <text evidence="12">In the C-terminal section; belongs to the sulfate adenylyltransferase family.</text>
</comment>
<sequence>MSGIKKQKTENQQKSTNVVYQAHHVSRNKRGQVVGTRGGFRGCTVWLTGLSGAGKTTISFALEEYLVSHAIPCYSLDGDNVRHGLNRNLGFSPGDREENIRRIAEVAKLFADAGLVCITSFISPFAKDRENARKIHESAGLPFFEIFVDAPLNICESRDVKGLYKRARAGEIKGFTGIDSDYEKPETPERVLKTNLSTVSDCVHQVVELLQEQNIVPYTIIKDIHELFVPENKLDHVRAEAETLPSLSITKLDLQWVQVLSEGWATPLKGFMREKEYLQVMHFDTLLDDGVINMSIPIVLPVSAEDKTRLEGCSKFVLAHGGRRVAILRDAEFYEHRKEERCSRVWGTTCTKHPHIKMVMESGDWLVGGDLQVLEKIRWNDGLDQYRLTPLELKQKCKEMNADAVFAFQLRNPVHNGHALLMQDTRRRLLERGYKHPVLLLHPLGGWTKDDDVPLDWRMKQHAAVLEEGVLDPKSTIVAIFPSPMLYAGPTEVQWHCRSRMIAGANFYIVGRDPAGMPHPETKKDLYEPTHGGKVLSMAPGLTSVEIIPFRVAAYNKAKKAMDFYDPARHNEFDFISGTRMRKLAREGENPPDGFMAPKAWKVLTDYYRSLEKN</sequence>
<protein>
    <recommendedName>
        <fullName evidence="15">Bifunctional 3'-phosphoadenosine 5'-phosphosulfate synthase 2</fullName>
        <shortName>PAPS synthase 2</shortName>
        <shortName>PAPSS 2</shortName>
    </recommendedName>
    <alternativeName>
        <fullName>Sulfurylase kinase 2</fullName>
        <shortName>SK 2</shortName>
        <shortName>SK2</shortName>
    </alternativeName>
    <domain>
        <recommendedName>
            <fullName evidence="15">Sulfate adenylyltransferase</fullName>
            <ecNumber evidence="13 14 15 16">2.7.7.4</ecNumber>
        </recommendedName>
        <alternativeName>
            <fullName>ATP-sulfurylase</fullName>
        </alternativeName>
        <alternativeName>
            <fullName>Sulfate adenylate transferase</fullName>
            <shortName>SAT</shortName>
        </alternativeName>
    </domain>
    <domain>
        <recommendedName>
            <fullName evidence="15">Adenylyl-sulfate kinase</fullName>
            <ecNumber evidence="13 14 15 16">2.7.1.25</ecNumber>
        </recommendedName>
        <alternativeName>
            <fullName>3'-phosphoadenosine-5'-phosphosulfate synthase</fullName>
        </alternativeName>
        <alternativeName>
            <fullName>APS kinase</fullName>
        </alternativeName>
        <alternativeName>
            <fullName>Adenosine-5'-phosphosulfate 3'-phosphotransferase</fullName>
        </alternativeName>
        <alternativeName>
            <fullName>Adenylylsulfate 3'-phosphotransferase</fullName>
        </alternativeName>
    </domain>
</protein>
<accession>O95340</accession>
<accession>Q9BZL2</accession>
<accession>Q9P0G6</accession>
<accession>Q9UHM1</accession>
<accession>Q9UKD3</accession>
<accession>Q9UP30</accession>
<name>PAPS2_HUMAN</name>
<dbReference type="EC" id="2.7.7.4" evidence="13 14 15 16"/>
<dbReference type="EC" id="2.7.1.25" evidence="13 14 15 16"/>
<dbReference type="EMBL" id="AF091242">
    <property type="protein sequence ID" value="AAC64583.1"/>
    <property type="molecule type" value="mRNA"/>
</dbReference>
<dbReference type="EMBL" id="AF074331">
    <property type="protein sequence ID" value="AAD38423.1"/>
    <property type="molecule type" value="mRNA"/>
</dbReference>
<dbReference type="EMBL" id="AF313907">
    <property type="protein sequence ID" value="AAK00296.1"/>
    <property type="molecule type" value="mRNA"/>
</dbReference>
<dbReference type="EMBL" id="AF160509">
    <property type="protein sequence ID" value="AAF40307.2"/>
    <property type="molecule type" value="Genomic_DNA"/>
</dbReference>
<dbReference type="EMBL" id="AF160503">
    <property type="protein sequence ID" value="AAF40307.2"/>
    <property type="status" value="JOINED"/>
    <property type="molecule type" value="Genomic_DNA"/>
</dbReference>
<dbReference type="EMBL" id="AF160504">
    <property type="protein sequence ID" value="AAF40307.2"/>
    <property type="status" value="JOINED"/>
    <property type="molecule type" value="Genomic_DNA"/>
</dbReference>
<dbReference type="EMBL" id="AF160505">
    <property type="protein sequence ID" value="AAF40307.2"/>
    <property type="status" value="JOINED"/>
    <property type="molecule type" value="Genomic_DNA"/>
</dbReference>
<dbReference type="EMBL" id="AF160506">
    <property type="protein sequence ID" value="AAF40307.2"/>
    <property type="status" value="JOINED"/>
    <property type="molecule type" value="Genomic_DNA"/>
</dbReference>
<dbReference type="EMBL" id="AF160507">
    <property type="protein sequence ID" value="AAF40307.2"/>
    <property type="status" value="JOINED"/>
    <property type="molecule type" value="Genomic_DNA"/>
</dbReference>
<dbReference type="EMBL" id="AF160508">
    <property type="protein sequence ID" value="AAF40307.2"/>
    <property type="status" value="JOINED"/>
    <property type="molecule type" value="Genomic_DNA"/>
</dbReference>
<dbReference type="EMBL" id="AF173365">
    <property type="protein sequence ID" value="AAF12761.1"/>
    <property type="molecule type" value="mRNA"/>
</dbReference>
<dbReference type="EMBL" id="AF150754">
    <property type="protein sequence ID" value="AAF20366.2"/>
    <property type="molecule type" value="mRNA"/>
</dbReference>
<dbReference type="EMBL" id="BC009894">
    <property type="protein sequence ID" value="AAH09894.1"/>
    <property type="molecule type" value="mRNA"/>
</dbReference>
<dbReference type="CCDS" id="CCDS44453.1">
    <molecule id="O95340-2"/>
</dbReference>
<dbReference type="CCDS" id="CCDS7385.1">
    <molecule id="O95340-1"/>
</dbReference>
<dbReference type="RefSeq" id="NP_001015880.1">
    <molecule id="O95340-2"/>
    <property type="nucleotide sequence ID" value="NM_001015880.2"/>
</dbReference>
<dbReference type="RefSeq" id="NP_004661.2">
    <molecule id="O95340-1"/>
    <property type="nucleotide sequence ID" value="NM_004670.3"/>
</dbReference>
<dbReference type="PDB" id="2AX4">
    <property type="method" value="X-ray"/>
    <property type="resolution" value="2.50 A"/>
    <property type="chains" value="A/B/C/D=21-218"/>
</dbReference>
<dbReference type="PDB" id="7FH3">
    <property type="method" value="X-ray"/>
    <property type="resolution" value="1.80 A"/>
    <property type="chains" value="A/B=223-614"/>
</dbReference>
<dbReference type="PDB" id="7FHA">
    <property type="method" value="X-ray"/>
    <property type="resolution" value="2.00 A"/>
    <property type="chains" value="A/B=223-614"/>
</dbReference>
<dbReference type="PDB" id="8I1N">
    <property type="method" value="X-ray"/>
    <property type="resolution" value="2.80 A"/>
    <property type="chains" value="A/B/C/D=22-218"/>
</dbReference>
<dbReference type="PDB" id="8I1O">
    <property type="method" value="X-ray"/>
    <property type="resolution" value="2.40 A"/>
    <property type="chains" value="A/B/C/D=16-218"/>
</dbReference>
<dbReference type="PDBsum" id="2AX4"/>
<dbReference type="PDBsum" id="7FH3"/>
<dbReference type="PDBsum" id="7FHA"/>
<dbReference type="PDBsum" id="8I1N"/>
<dbReference type="PDBsum" id="8I1O"/>
<dbReference type="SMR" id="O95340"/>
<dbReference type="BioGRID" id="114521">
    <property type="interactions" value="64"/>
</dbReference>
<dbReference type="FunCoup" id="O95340">
    <property type="interactions" value="934"/>
</dbReference>
<dbReference type="IntAct" id="O95340">
    <property type="interactions" value="19"/>
</dbReference>
<dbReference type="STRING" id="9606.ENSP00000406157"/>
<dbReference type="BindingDB" id="O95340"/>
<dbReference type="ChEMBL" id="CHEMBL4105790"/>
<dbReference type="GlyGen" id="O95340">
    <property type="glycosylation" value="1 site, 1 O-linked glycan (1 site)"/>
</dbReference>
<dbReference type="iPTMnet" id="O95340"/>
<dbReference type="MetOSite" id="O95340"/>
<dbReference type="PhosphoSitePlus" id="O95340"/>
<dbReference type="SwissPalm" id="O95340"/>
<dbReference type="BioMuta" id="PAPSS2"/>
<dbReference type="jPOST" id="O95340"/>
<dbReference type="MassIVE" id="O95340"/>
<dbReference type="PaxDb" id="9606-ENSP00000406157"/>
<dbReference type="PeptideAtlas" id="O95340"/>
<dbReference type="ProteomicsDB" id="50808">
    <molecule id="O95340-1"/>
</dbReference>
<dbReference type="ProteomicsDB" id="50809">
    <molecule id="O95340-2"/>
</dbReference>
<dbReference type="Pumba" id="O95340"/>
<dbReference type="TopDownProteomics" id="O95340-1">
    <molecule id="O95340-1"/>
</dbReference>
<dbReference type="Antibodypedia" id="30161">
    <property type="antibodies" value="255 antibodies from 25 providers"/>
</dbReference>
<dbReference type="DNASU" id="9060"/>
<dbReference type="Ensembl" id="ENST00000361175.8">
    <molecule id="O95340-1"/>
    <property type="protein sequence ID" value="ENSP00000354436.4"/>
    <property type="gene ID" value="ENSG00000198682.13"/>
</dbReference>
<dbReference type="Ensembl" id="ENST00000456849.2">
    <molecule id="O95340-2"/>
    <property type="protein sequence ID" value="ENSP00000406157.1"/>
    <property type="gene ID" value="ENSG00000198682.13"/>
</dbReference>
<dbReference type="GeneID" id="9060"/>
<dbReference type="KEGG" id="hsa:9060"/>
<dbReference type="MANE-Select" id="ENST00000456849.2">
    <molecule id="O95340-2"/>
    <property type="protein sequence ID" value="ENSP00000406157.1"/>
    <property type="RefSeq nucleotide sequence ID" value="NM_001015880.2"/>
    <property type="RefSeq protein sequence ID" value="NP_001015880.1"/>
</dbReference>
<dbReference type="UCSC" id="uc001kew.4">
    <molecule id="O95340-1"/>
    <property type="organism name" value="human"/>
</dbReference>
<dbReference type="AGR" id="HGNC:8604"/>
<dbReference type="CTD" id="9060"/>
<dbReference type="DisGeNET" id="9060"/>
<dbReference type="GeneCards" id="PAPSS2"/>
<dbReference type="HGNC" id="HGNC:8604">
    <property type="gene designation" value="PAPSS2"/>
</dbReference>
<dbReference type="HPA" id="ENSG00000198682">
    <property type="expression patterns" value="Tissue enhanced (adrenal)"/>
</dbReference>
<dbReference type="MalaCards" id="PAPSS2"/>
<dbReference type="MIM" id="603005">
    <property type="type" value="gene"/>
</dbReference>
<dbReference type="MIM" id="612847">
    <property type="type" value="phenotype"/>
</dbReference>
<dbReference type="neXtProt" id="NX_O95340"/>
<dbReference type="OpenTargets" id="ENSG00000198682"/>
<dbReference type="Orphanet" id="448242">
    <property type="disease" value="Autosomal recessive brachyolmia"/>
</dbReference>
<dbReference type="Orphanet" id="93282">
    <property type="disease" value="Spondyloepimetaphyseal dysplasia, PAPSS2 type"/>
</dbReference>
<dbReference type="PharmGKB" id="PA383"/>
<dbReference type="VEuPathDB" id="HostDB:ENSG00000198682"/>
<dbReference type="eggNOG" id="KOG4238">
    <property type="taxonomic scope" value="Eukaryota"/>
</dbReference>
<dbReference type="GeneTree" id="ENSGT00390000009613"/>
<dbReference type="HOGENOM" id="CLU_009463_3_0_1"/>
<dbReference type="InParanoid" id="O95340"/>
<dbReference type="OMA" id="IEIYKHH"/>
<dbReference type="OrthoDB" id="506431at2759"/>
<dbReference type="PAN-GO" id="O95340">
    <property type="GO annotations" value="3 GO annotations based on evolutionary models"/>
</dbReference>
<dbReference type="PhylomeDB" id="O95340"/>
<dbReference type="TreeFam" id="TF313143"/>
<dbReference type="BioCyc" id="MetaCyc:HS07544-MONOMER"/>
<dbReference type="BRENDA" id="2.7.1.25">
    <property type="organism ID" value="2681"/>
</dbReference>
<dbReference type="BRENDA" id="2.7.7.4">
    <property type="organism ID" value="2681"/>
</dbReference>
<dbReference type="PathwayCommons" id="O95340"/>
<dbReference type="Reactome" id="R-HSA-174362">
    <property type="pathway name" value="Transport and synthesis of PAPS"/>
</dbReference>
<dbReference type="Reactome" id="R-HSA-2408550">
    <property type="pathway name" value="Metabolism of ingested H2SeO4 and H2SeO3 into H2Se"/>
</dbReference>
<dbReference type="Reactome" id="R-HSA-3560796">
    <property type="pathway name" value="Defective PAPSS2 causes SEMD-PA"/>
</dbReference>
<dbReference type="SABIO-RK" id="O95340"/>
<dbReference type="SignaLink" id="O95340"/>
<dbReference type="UniPathway" id="UPA00097"/>
<dbReference type="BioGRID-ORCS" id="9060">
    <property type="hits" value="15 hits in 1151 CRISPR screens"/>
</dbReference>
<dbReference type="ChiTaRS" id="PAPSS2">
    <property type="organism name" value="human"/>
</dbReference>
<dbReference type="EvolutionaryTrace" id="O95340"/>
<dbReference type="GeneWiki" id="PAPSS2"/>
<dbReference type="GenomeRNAi" id="9060"/>
<dbReference type="Pharos" id="O95340">
    <property type="development level" value="Tbio"/>
</dbReference>
<dbReference type="PRO" id="PR:O95340"/>
<dbReference type="Proteomes" id="UP000005640">
    <property type="component" value="Chromosome 10"/>
</dbReference>
<dbReference type="RNAct" id="O95340">
    <property type="molecule type" value="protein"/>
</dbReference>
<dbReference type="Bgee" id="ENSG00000198682">
    <property type="expression patterns" value="Expressed in tibia and 189 other cell types or tissues"/>
</dbReference>
<dbReference type="ExpressionAtlas" id="O95340">
    <property type="expression patterns" value="baseline and differential"/>
</dbReference>
<dbReference type="GO" id="GO:0005829">
    <property type="term" value="C:cytosol"/>
    <property type="evidence" value="ECO:0000314"/>
    <property type="project" value="FlyBase"/>
</dbReference>
<dbReference type="GO" id="GO:0005634">
    <property type="term" value="C:nucleus"/>
    <property type="evidence" value="ECO:0000314"/>
    <property type="project" value="FlyBase"/>
</dbReference>
<dbReference type="GO" id="GO:0004020">
    <property type="term" value="F:adenylylsulfate kinase activity"/>
    <property type="evidence" value="ECO:0000318"/>
    <property type="project" value="GO_Central"/>
</dbReference>
<dbReference type="GO" id="GO:0005524">
    <property type="term" value="F:ATP binding"/>
    <property type="evidence" value="ECO:0007669"/>
    <property type="project" value="UniProtKB-KW"/>
</dbReference>
<dbReference type="GO" id="GO:0016779">
    <property type="term" value="F:nucleotidyltransferase activity"/>
    <property type="evidence" value="ECO:0000250"/>
    <property type="project" value="UniProtKB"/>
</dbReference>
<dbReference type="GO" id="GO:0004781">
    <property type="term" value="F:sulfate adenylyltransferase (ATP) activity"/>
    <property type="evidence" value="ECO:0000250"/>
    <property type="project" value="UniProtKB"/>
</dbReference>
<dbReference type="GO" id="GO:0050428">
    <property type="term" value="P:3'-phosphoadenosine 5'-phosphosulfate biosynthetic process"/>
    <property type="evidence" value="ECO:0000315"/>
    <property type="project" value="UniProtKB"/>
</dbReference>
<dbReference type="GO" id="GO:0042445">
    <property type="term" value="P:hormone metabolic process"/>
    <property type="evidence" value="ECO:0000315"/>
    <property type="project" value="UniProtKB"/>
</dbReference>
<dbReference type="GO" id="GO:0000103">
    <property type="term" value="P:sulfate assimilation"/>
    <property type="evidence" value="ECO:0000315"/>
    <property type="project" value="UniProtKB"/>
</dbReference>
<dbReference type="CDD" id="cd02027">
    <property type="entry name" value="APSK"/>
    <property type="match status" value="1"/>
</dbReference>
<dbReference type="CDD" id="cd00517">
    <property type="entry name" value="ATPS"/>
    <property type="match status" value="1"/>
</dbReference>
<dbReference type="FunFam" id="3.40.50.300:FF:000212">
    <property type="entry name" value="Adenylyl-sulfate kinase"/>
    <property type="match status" value="1"/>
</dbReference>
<dbReference type="FunFam" id="3.10.400.10:FF:000001">
    <property type="entry name" value="bifunctional 3'-phosphoadenosine 5'-phosphosulfate synthase 1"/>
    <property type="match status" value="1"/>
</dbReference>
<dbReference type="FunFam" id="3.40.50.620:FF:000006">
    <property type="entry name" value="bifunctional 3'-phosphoadenosine 5'-phosphosulfate synthase 1"/>
    <property type="match status" value="1"/>
</dbReference>
<dbReference type="Gene3D" id="3.40.50.620">
    <property type="entry name" value="HUPs"/>
    <property type="match status" value="1"/>
</dbReference>
<dbReference type="Gene3D" id="3.40.50.300">
    <property type="entry name" value="P-loop containing nucleotide triphosphate hydrolases"/>
    <property type="match status" value="1"/>
</dbReference>
<dbReference type="Gene3D" id="3.10.400.10">
    <property type="entry name" value="Sulfate adenylyltransferase"/>
    <property type="match status" value="1"/>
</dbReference>
<dbReference type="HAMAP" id="MF_00065">
    <property type="entry name" value="Adenylyl_sulf_kinase"/>
    <property type="match status" value="1"/>
</dbReference>
<dbReference type="InterPro" id="IPR002891">
    <property type="entry name" value="APS_kinase"/>
</dbReference>
<dbReference type="InterPro" id="IPR025980">
    <property type="entry name" value="ATP-Sase_PUA-like_dom"/>
</dbReference>
<dbReference type="InterPro" id="IPR027417">
    <property type="entry name" value="P-loop_NTPase"/>
</dbReference>
<dbReference type="InterPro" id="IPR015947">
    <property type="entry name" value="PUA-like_sf"/>
</dbReference>
<dbReference type="InterPro" id="IPR014729">
    <property type="entry name" value="Rossmann-like_a/b/a_fold"/>
</dbReference>
<dbReference type="InterPro" id="IPR024951">
    <property type="entry name" value="Sulfurylase_cat_dom"/>
</dbReference>
<dbReference type="InterPro" id="IPR002650">
    <property type="entry name" value="Sulphate_adenylyltransferase"/>
</dbReference>
<dbReference type="NCBIfam" id="TIGR00455">
    <property type="entry name" value="apsK"/>
    <property type="match status" value="1"/>
</dbReference>
<dbReference type="NCBIfam" id="NF003013">
    <property type="entry name" value="PRK03846.1"/>
    <property type="match status" value="1"/>
</dbReference>
<dbReference type="NCBIfam" id="TIGR00339">
    <property type="entry name" value="sopT"/>
    <property type="match status" value="1"/>
</dbReference>
<dbReference type="PANTHER" id="PTHR11055">
    <property type="entry name" value="BIFUNCTIONAL 3'-PHOSPHOADENOSINE 5'-PHOSPHOSULFATE SYNTHASE"/>
    <property type="match status" value="1"/>
</dbReference>
<dbReference type="PANTHER" id="PTHR11055:SF16">
    <property type="entry name" value="BIFUNCTIONAL 3'-PHOSPHOADENOSINE 5'-PHOSPHOSULFATE SYNTHASE 2"/>
    <property type="match status" value="1"/>
</dbReference>
<dbReference type="Pfam" id="PF01583">
    <property type="entry name" value="APS_kinase"/>
    <property type="match status" value="1"/>
</dbReference>
<dbReference type="Pfam" id="PF01747">
    <property type="entry name" value="ATP-sulfurylase"/>
    <property type="match status" value="1"/>
</dbReference>
<dbReference type="Pfam" id="PF14306">
    <property type="entry name" value="PUA_2"/>
    <property type="match status" value="1"/>
</dbReference>
<dbReference type="SUPFAM" id="SSF52374">
    <property type="entry name" value="Nucleotidylyl transferase"/>
    <property type="match status" value="1"/>
</dbReference>
<dbReference type="SUPFAM" id="SSF52540">
    <property type="entry name" value="P-loop containing nucleoside triphosphate hydrolases"/>
    <property type="match status" value="1"/>
</dbReference>
<dbReference type="SUPFAM" id="SSF88697">
    <property type="entry name" value="PUA domain-like"/>
    <property type="match status" value="1"/>
</dbReference>
<organism>
    <name type="scientific">Homo sapiens</name>
    <name type="common">Human</name>
    <dbReference type="NCBI Taxonomy" id="9606"/>
    <lineage>
        <taxon>Eukaryota</taxon>
        <taxon>Metazoa</taxon>
        <taxon>Chordata</taxon>
        <taxon>Craniata</taxon>
        <taxon>Vertebrata</taxon>
        <taxon>Euteleostomi</taxon>
        <taxon>Mammalia</taxon>
        <taxon>Eutheria</taxon>
        <taxon>Euarchontoglires</taxon>
        <taxon>Primates</taxon>
        <taxon>Haplorrhini</taxon>
        <taxon>Catarrhini</taxon>
        <taxon>Hominidae</taxon>
        <taxon>Homo</taxon>
    </lineage>
</organism>